<gene>
    <name evidence="1" type="primary">tatA</name>
    <name type="ordered locus">RMA_1184</name>
</gene>
<keyword id="KW-0997">Cell inner membrane</keyword>
<keyword id="KW-1003">Cell membrane</keyword>
<keyword id="KW-0472">Membrane</keyword>
<keyword id="KW-0653">Protein transport</keyword>
<keyword id="KW-0811">Translocation</keyword>
<keyword id="KW-0812">Transmembrane</keyword>
<keyword id="KW-1133">Transmembrane helix</keyword>
<keyword id="KW-0813">Transport</keyword>
<sequence length="53" mass="5708">MGMSVSHLLIVLLIIFVLFGAGKLPQVMSDLAKGLKAFKDGMKDDGSDNDKNK</sequence>
<protein>
    <recommendedName>
        <fullName evidence="1">Sec-independent protein translocase protein TatA</fullName>
    </recommendedName>
</protein>
<evidence type="ECO:0000255" key="1">
    <source>
        <dbReference type="HAMAP-Rule" id="MF_00236"/>
    </source>
</evidence>
<evidence type="ECO:0000305" key="2"/>
<organism>
    <name type="scientific">Rickettsia massiliae (strain Mtu5)</name>
    <dbReference type="NCBI Taxonomy" id="416276"/>
    <lineage>
        <taxon>Bacteria</taxon>
        <taxon>Pseudomonadati</taxon>
        <taxon>Pseudomonadota</taxon>
        <taxon>Alphaproteobacteria</taxon>
        <taxon>Rickettsiales</taxon>
        <taxon>Rickettsiaceae</taxon>
        <taxon>Rickettsieae</taxon>
        <taxon>Rickettsia</taxon>
        <taxon>spotted fever group</taxon>
    </lineage>
</organism>
<proteinExistence type="inferred from homology"/>
<accession>A8F2N4</accession>
<name>TATA_RICM5</name>
<feature type="chain" id="PRO_0000336640" description="Sec-independent protein translocase protein TatA">
    <location>
        <begin position="1"/>
        <end position="53"/>
    </location>
</feature>
<feature type="transmembrane region" description="Helical" evidence="1">
    <location>
        <begin position="1"/>
        <end position="21"/>
    </location>
</feature>
<comment type="function">
    <text evidence="1">Part of the twin-arginine translocation (Tat) system that transports large folded proteins containing a characteristic twin-arginine motif in their signal peptide across membranes. TatA could form the protein-conducting channel of the Tat system.</text>
</comment>
<comment type="subunit">
    <text evidence="1">The Tat system comprises two distinct complexes: a TatABC complex, containing multiple copies of TatA, TatB and TatC subunits, and a separate TatA complex, containing only TatA subunits. Substrates initially bind to the TatABC complex, which probably triggers association of the separate TatA complex to form the active translocon.</text>
</comment>
<comment type="subcellular location">
    <subcellularLocation>
        <location evidence="1">Cell inner membrane</location>
        <topology evidence="1">Single-pass membrane protein</topology>
    </subcellularLocation>
</comment>
<comment type="similarity">
    <text evidence="1">Belongs to the TatA/E family.</text>
</comment>
<comment type="sequence caution" evidence="2">
    <conflict type="erroneous initiation">
        <sequence resource="EMBL-CDS" id="ABV85170"/>
    </conflict>
</comment>
<dbReference type="EMBL" id="CP000683">
    <property type="protein sequence ID" value="ABV85170.1"/>
    <property type="status" value="ALT_INIT"/>
    <property type="molecule type" value="Genomic_DNA"/>
</dbReference>
<dbReference type="RefSeq" id="WP_014365434.1">
    <property type="nucleotide sequence ID" value="NC_009900.1"/>
</dbReference>
<dbReference type="SMR" id="A8F2N4"/>
<dbReference type="KEGG" id="rms:RMA_1184"/>
<dbReference type="HOGENOM" id="CLU_086034_6_2_5"/>
<dbReference type="Proteomes" id="UP000001311">
    <property type="component" value="Chromosome"/>
</dbReference>
<dbReference type="GO" id="GO:0033281">
    <property type="term" value="C:TAT protein transport complex"/>
    <property type="evidence" value="ECO:0007669"/>
    <property type="project" value="UniProtKB-UniRule"/>
</dbReference>
<dbReference type="GO" id="GO:0008320">
    <property type="term" value="F:protein transmembrane transporter activity"/>
    <property type="evidence" value="ECO:0007669"/>
    <property type="project" value="UniProtKB-UniRule"/>
</dbReference>
<dbReference type="GO" id="GO:0043953">
    <property type="term" value="P:protein transport by the Tat complex"/>
    <property type="evidence" value="ECO:0007669"/>
    <property type="project" value="UniProtKB-UniRule"/>
</dbReference>
<dbReference type="Gene3D" id="1.20.5.3310">
    <property type="match status" value="1"/>
</dbReference>
<dbReference type="HAMAP" id="MF_00236">
    <property type="entry name" value="TatA_E"/>
    <property type="match status" value="1"/>
</dbReference>
<dbReference type="InterPro" id="IPR003369">
    <property type="entry name" value="TatA/B/E"/>
</dbReference>
<dbReference type="InterPro" id="IPR006312">
    <property type="entry name" value="TatA/E"/>
</dbReference>
<dbReference type="NCBIfam" id="NF002402">
    <property type="entry name" value="PRK01470.1"/>
    <property type="match status" value="1"/>
</dbReference>
<dbReference type="NCBIfam" id="TIGR01411">
    <property type="entry name" value="tatAE"/>
    <property type="match status" value="1"/>
</dbReference>
<dbReference type="PANTHER" id="PTHR42982">
    <property type="entry name" value="SEC-INDEPENDENT PROTEIN TRANSLOCASE PROTEIN TATA"/>
    <property type="match status" value="1"/>
</dbReference>
<dbReference type="PANTHER" id="PTHR42982:SF1">
    <property type="entry name" value="SEC-INDEPENDENT PROTEIN TRANSLOCASE PROTEIN TATA"/>
    <property type="match status" value="1"/>
</dbReference>
<dbReference type="Pfam" id="PF02416">
    <property type="entry name" value="TatA_B_E"/>
    <property type="match status" value="1"/>
</dbReference>
<reference key="1">
    <citation type="journal article" date="2007" name="Genome Res.">
        <title>Lateral gene transfer between obligate intracellular bacteria: evidence from the Rickettsia massiliae genome.</title>
        <authorList>
            <person name="Blanc G."/>
            <person name="Ogata H."/>
            <person name="Robert C."/>
            <person name="Audic S."/>
            <person name="Claverie J.-M."/>
            <person name="Raoult D."/>
        </authorList>
    </citation>
    <scope>NUCLEOTIDE SEQUENCE [LARGE SCALE GENOMIC DNA]</scope>
    <source>
        <strain>Mtu5</strain>
    </source>
</reference>